<evidence type="ECO:0000250" key="1"/>
<evidence type="ECO:0000255" key="2"/>
<evidence type="ECO:0000255" key="3">
    <source>
        <dbReference type="PROSITE-ProRule" id="PRU00498"/>
    </source>
</evidence>
<evidence type="ECO:0000256" key="4">
    <source>
        <dbReference type="SAM" id="MobiDB-lite"/>
    </source>
</evidence>
<evidence type="ECO:0000269" key="5">
    <source>
    </source>
</evidence>
<evidence type="ECO:0000269" key="6">
    <source>
    </source>
</evidence>
<evidence type="ECO:0000269" key="7">
    <source>
    </source>
</evidence>
<evidence type="ECO:0000269" key="8">
    <source>
    </source>
</evidence>
<evidence type="ECO:0000305" key="9"/>
<sequence length="139" mass="14504">MPNIFKILLIVLLAVVSFRLSASTGDKKTANDGSGNNSSAGIGTKIKRIVTAGLLFTSLATGGAEAIGRSNAQGGNAAGLVPSHLTNRSMAPPPPPAQFEKGAATRVEKMRAQLRELAEKMTDKDPKRLSPSGPDPHHH</sequence>
<accession>Q9BN21</accession>
<organism>
    <name type="scientific">Heterodera glycines</name>
    <name type="common">Soybean cyst nematode worm</name>
    <dbReference type="NCBI Taxonomy" id="51029"/>
    <lineage>
        <taxon>Eukaryota</taxon>
        <taxon>Metazoa</taxon>
        <taxon>Ecdysozoa</taxon>
        <taxon>Nematoda</taxon>
        <taxon>Chromadorea</taxon>
        <taxon>Rhabditida</taxon>
        <taxon>Tylenchina</taxon>
        <taxon>Tylenchomorpha</taxon>
        <taxon>Tylenchoidea</taxon>
        <taxon>Heteroderidae</taxon>
        <taxon>Heteroderinae</taxon>
        <taxon>Heterodera</taxon>
    </lineage>
</organism>
<proteinExistence type="evidence at protein level"/>
<keyword id="KW-0052">Apoplast</keyword>
<keyword id="KW-0175">Coiled coil</keyword>
<keyword id="KW-0221">Differentiation</keyword>
<keyword id="KW-0325">Glycoprotein</keyword>
<keyword id="KW-1035">Host cytoplasm</keyword>
<keyword id="KW-0964">Secreted</keyword>
<keyword id="KW-0732">Signal</keyword>
<protein>
    <recommendedName>
        <fullName>CLAVATA3/ESR (CLE)-related protein 1</fullName>
        <shortName>CLE-like peptide 1</shortName>
        <shortName>Hg-SYV46</shortName>
    </recommendedName>
    <alternativeName>
        <fullName>Esophageal gland cell secretory protein 1</fullName>
    </alternativeName>
</protein>
<gene>
    <name type="primary">CLE1</name>
    <name type="synonym">2B10</name>
    <name type="synonym">HSP1</name>
    <name type="synonym">SYV46</name>
</gene>
<reference key="1">
    <citation type="journal article" date="2001" name="Mol. Plant Microbe Interact.">
        <title>Signal peptide-selection of cDNA cloned directly from the esophageal gland cells of the soybean cyst nematode Heterodera glycines.</title>
        <authorList>
            <person name="Wang X."/>
            <person name="Allen R."/>
            <person name="Ding X."/>
            <person name="Goellner M."/>
            <person name="Maier T."/>
            <person name="de Boer J.M."/>
            <person name="Baum T.J."/>
            <person name="Hussey R.S."/>
            <person name="Davis E.L."/>
        </authorList>
    </citation>
    <scope>NUCLEOTIDE SEQUENCE [MRNA]</scope>
    <scope>TISSUE SPECIFICITY</scope>
    <source>
        <tissue>Esophagus</tissue>
        <tissue>Gland</tissue>
    </source>
</reference>
<reference key="2">
    <citation type="journal article" date="2010" name="New Phytol.">
        <title>Dual roles for the variable domain in protein trafficking and host-specific recognition of Heterodera glycines CLE effector proteins.</title>
        <authorList>
            <person name="Wang J."/>
            <person name="Lee C."/>
            <person name="Replogle A."/>
            <person name="Joshi S."/>
            <person name="Korkin D."/>
            <person name="Hussey R."/>
            <person name="Baum T.J."/>
            <person name="Davis E.L."/>
            <person name="Wang X."/>
            <person name="Mitchum M.G."/>
        </authorList>
    </citation>
    <scope>NUCLEOTIDE SEQUENCE [GENOMIC DNA]</scope>
    <scope>FUNCTION</scope>
    <scope>TISSUE SPECIFICITY</scope>
    <scope>DEVELOPMENTAL STAGE</scope>
    <scope>SUBCELLULAR LOCATION</scope>
</reference>
<reference key="3">
    <citation type="journal article" date="2003" name="Mol. Plant Microbe Interact.">
        <title>The parasitome of the phytonematode Heterodera glycines.</title>
        <authorList>
            <person name="Gao B."/>
            <person name="Allen R."/>
            <person name="Maier T."/>
            <person name="Davis E.L."/>
            <person name="Baum T.J."/>
            <person name="Hussey R.S."/>
        </authorList>
    </citation>
    <scope>TISSUE SPECIFICITY</scope>
    <source>
        <tissue>Gland</tissue>
    </source>
</reference>
<reference key="4">
    <citation type="journal article" date="2005" name="Mol. Plant Pathol.">
        <title>A parasitism gene from a plant-parasitic nematode with function similar to CLAVATA3/ESR (CLE) of Arabidopsis thaliana.</title>
        <authorList>
            <person name="Wang X."/>
            <person name="Mitchum M.G."/>
            <person name="Gao B."/>
            <person name="Li C."/>
            <person name="Diab H."/>
            <person name="Baum T.J."/>
            <person name="Hussey R.S."/>
            <person name="Davis E.L."/>
        </authorList>
    </citation>
    <scope>FUNCTION</scope>
    <scope>TISSUE SPECIFICITY</scope>
</reference>
<reference key="5">
    <citation type="journal article" date="2009" name="Mol. Plant Pathol.">
        <authorList>
            <person name="Davis E.L."/>
        </authorList>
    </citation>
    <scope>ERRATUM OF PUBMED:20565649</scope>
</reference>
<reference key="6">
    <citation type="journal article" date="2008" name="Curr. Opin. Plant Biol.">
        <title>Diverse and conserved roles of CLE peptides.</title>
        <authorList>
            <person name="Mitchum M.G."/>
            <person name="Wang X."/>
            <person name="Davis E.L."/>
        </authorList>
    </citation>
    <scope>REVIEW</scope>
</reference>
<dbReference type="EMBL" id="AF273728">
    <property type="protein sequence ID" value="AAG21331.2"/>
    <property type="molecule type" value="mRNA"/>
</dbReference>
<dbReference type="EMBL" id="FJ503004">
    <property type="protein sequence ID" value="ACT32609.1"/>
    <property type="molecule type" value="Genomic_DNA"/>
</dbReference>
<dbReference type="GlyCosmos" id="Q9BN21">
    <property type="glycosylation" value="2 sites, No reported glycans"/>
</dbReference>
<dbReference type="GO" id="GO:0005576">
    <property type="term" value="C:extracellular region"/>
    <property type="evidence" value="ECO:0007669"/>
    <property type="project" value="UniProtKB-SubCell"/>
</dbReference>
<dbReference type="GO" id="GO:0030430">
    <property type="term" value="C:host cell cytoplasm"/>
    <property type="evidence" value="ECO:0007669"/>
    <property type="project" value="UniProtKB-SubCell"/>
</dbReference>
<dbReference type="GO" id="GO:0043655">
    <property type="term" value="C:host extracellular space"/>
    <property type="evidence" value="ECO:0007669"/>
    <property type="project" value="UniProtKB-SubCell"/>
</dbReference>
<dbReference type="GO" id="GO:0030154">
    <property type="term" value="P:cell differentiation"/>
    <property type="evidence" value="ECO:0007669"/>
    <property type="project" value="UniProtKB-KW"/>
</dbReference>
<comment type="function">
    <text evidence="1 7 8">Mimics host plant CLE extracellular signal peptides that regulate cell fate. May play a role in the differentiation or division of feeding cells (syncytia) induced in plant roots during infection (By similarity).</text>
</comment>
<comment type="subcellular location">
    <subcellularLocation>
        <location evidence="7">Secreted</location>
    </subcellularLocation>
    <subcellularLocation>
        <location evidence="7">Host cytoplasm</location>
    </subcellularLocation>
    <subcellularLocation>
        <location evidence="7">Host extracellular space</location>
    </subcellularLocation>
    <subcellularLocation>
        <location evidence="7">Secreted</location>
        <location evidence="7">Extracellular space</location>
        <location evidence="7">Apoplast</location>
    </subcellularLocation>
    <text evidence="7">Present in secretory granules within the dorsal esophageal gland secretory cell and in the dorsal gland ampulla (collecting reservoir) at the base of the nematode stylet. Secreted into host root cells via the nematode stylet to transform the recipient cells into enlarged multinucleate feeding cells called giant-cells or syncytia. Secreted from the host cytoplasm to the host apoplasm via a plant secretory pathway.</text>
</comment>
<comment type="tissue specificity">
    <text evidence="5 6 7 8">Highly expressed exclusively within the dorsal esophageal gland cell during syncytium formation in host plants (at protein level).</text>
</comment>
<comment type="developmental stage">
    <text evidence="7">Strongly up-regulated during root colonization, from the onset of syncytium formation by parasitic second-stage juveniles (pJ2) through the J3?J4 molts of sedentary life stages that become adult females.</text>
</comment>
<comment type="miscellaneous">
    <text>Failed to trigger CLE-like cell fate regulation in Arabidopsis thaliana, a non-host plant.</text>
</comment>
<comment type="similarity">
    <text evidence="9">Belongs to the CLV3/ESR signal peptide family.</text>
</comment>
<comment type="online information" name="Protein Spotlight">
    <link uri="https://www.proteinspotlight.org/back_issues/151/"/>
    <text>the root of the problem - Issue 151 of July 2013</text>
</comment>
<name>CLE1_HETGL</name>
<feature type="signal peptide" evidence="2">
    <location>
        <begin position="1"/>
        <end position="22"/>
    </location>
</feature>
<feature type="chain" id="PRO_0000401215" description="CLAVATA3/ESR (CLE)-related protein 1">
    <location>
        <begin position="23"/>
        <end position="139"/>
    </location>
</feature>
<feature type="region of interest" description="Required for secretion from the host cytoplasm to the host apoplasm">
    <location>
        <begin position="23"/>
        <end position="90"/>
    </location>
</feature>
<feature type="region of interest" description="Disordered" evidence="4">
    <location>
        <begin position="66"/>
        <end position="139"/>
    </location>
</feature>
<feature type="coiled-coil region" evidence="2">
    <location>
        <begin position="100"/>
        <end position="125"/>
    </location>
</feature>
<feature type="short sequence motif" description="CLE">
    <location>
        <begin position="128"/>
        <end position="139"/>
    </location>
</feature>
<feature type="compositionally biased region" description="Basic and acidic residues" evidence="4">
    <location>
        <begin position="106"/>
        <end position="128"/>
    </location>
</feature>
<feature type="glycosylation site" description="N-linked (GlcNAc...) asparagine" evidence="3">
    <location>
        <position position="37"/>
    </location>
</feature>
<feature type="glycosylation site" description="N-linked (GlcNAc...) asparagine" evidence="3">
    <location>
        <position position="87"/>
    </location>
</feature>